<protein>
    <recommendedName>
        <fullName>N-acylneuraminate cytidylyltransferase</fullName>
        <ecNumber>2.7.7.43</ecNumber>
    </recommendedName>
    <alternativeName>
        <fullName>CMP-N-acetylneuraminic acid synthase</fullName>
        <shortName>CMP-NeuNAc synthase</shortName>
    </alternativeName>
    <alternativeName>
        <fullName>CMP-sialic acid synthase</fullName>
    </alternativeName>
</protein>
<name>NEUA_STRA1</name>
<keyword id="KW-0972">Capsule biogenesis/degradation</keyword>
<keyword id="KW-0963">Cytoplasm</keyword>
<keyword id="KW-0270">Exopolysaccharide synthesis</keyword>
<keyword id="KW-0460">Magnesium</keyword>
<keyword id="KW-0464">Manganese</keyword>
<keyword id="KW-0548">Nucleotidyltransferase</keyword>
<keyword id="KW-0808">Transferase</keyword>
<organism>
    <name type="scientific">Streptococcus agalactiae serotype Ia (strain ATCC 27591 / A909 / CDC SS700)</name>
    <dbReference type="NCBI Taxonomy" id="205921"/>
    <lineage>
        <taxon>Bacteria</taxon>
        <taxon>Bacillati</taxon>
        <taxon>Bacillota</taxon>
        <taxon>Bacilli</taxon>
        <taxon>Lactobacillales</taxon>
        <taxon>Streptococcaceae</taxon>
        <taxon>Streptococcus</taxon>
    </lineage>
</organism>
<gene>
    <name type="primary">neuA</name>
    <name type="ordered locus">SAK_1247</name>
</gene>
<proteinExistence type="inferred from homology"/>
<sequence length="413" mass="47670">MKPICIIPARSGSKGLPDKNMLFLAGKPMIFHTIDAAIESGMFDKKDIFVSTDSELYREICLERGISVVMRKPELSTDQATSYDMLKDFLSDYEDNQEFVLLQVTSPLRKSWHIKEAMEYYSSHDVDNVVSFSEVEKHPGLFTTLSDKGYAIDMVGADKGYRRQDLQPLYYPNGAIFISNKETYLREKSFFTSRTYAYQMAKEFSLDVDTRDDFIHVIGHLFFDYAIREKENKVFYKEGYSRLFNREASKIILGDSKTISISLENYHNYSQGGVTLATMLENLPNFLTANVTEAFVSIGVNDLITGYSVEEIFSNFQKLYSLLAENKIKMRFTTIAYTLFRETVNNADIEKINQWLTEFCYQNQIPLLDINRFLSKDGNLNYHLTSDGLHFTQEANDLLQSQYQLFVDEVKTL</sequence>
<accession>P0A4V1</accession>
<accession>Q3K0U2</accession>
<accession>Q53598</accession>
<accession>Q9S0S5</accession>
<reference key="1">
    <citation type="journal article" date="1999" name="J. Bacteriol.">
        <title>Molecular characterization of type-specific capsular polysaccharide biosynthesis genes of Streptococcus agalactiae type Ia.</title>
        <authorList>
            <person name="Yamamoto S."/>
            <person name="Miyake K."/>
            <person name="Koike Y."/>
            <person name="Watanabe M."/>
            <person name="Machida Y."/>
            <person name="Ohta M."/>
            <person name="Iijima S."/>
        </authorList>
    </citation>
    <scope>NUCLEOTIDE SEQUENCE [GENOMIC DNA]</scope>
    <source>
        <strain>OI1 / Serotype Ia</strain>
    </source>
</reference>
<reference key="2">
    <citation type="journal article" date="2005" name="Proc. Natl. Acad. Sci. U.S.A.">
        <title>Genome analysis of multiple pathogenic isolates of Streptococcus agalactiae: implications for the microbial 'pan-genome'.</title>
        <authorList>
            <person name="Tettelin H."/>
            <person name="Masignani V."/>
            <person name="Cieslewicz M.J."/>
            <person name="Donati C."/>
            <person name="Medini D."/>
            <person name="Ward N.L."/>
            <person name="Angiuoli S.V."/>
            <person name="Crabtree J."/>
            <person name="Jones A.L."/>
            <person name="Durkin A.S."/>
            <person name="DeBoy R.T."/>
            <person name="Davidsen T.M."/>
            <person name="Mora M."/>
            <person name="Scarselli M."/>
            <person name="Margarit y Ros I."/>
            <person name="Peterson J.D."/>
            <person name="Hauser C.R."/>
            <person name="Sundaram J.P."/>
            <person name="Nelson W.C."/>
            <person name="Madupu R."/>
            <person name="Brinkac L.M."/>
            <person name="Dodson R.J."/>
            <person name="Rosovitz M.J."/>
            <person name="Sullivan S.A."/>
            <person name="Daugherty S.C."/>
            <person name="Haft D.H."/>
            <person name="Selengut J."/>
            <person name="Gwinn M.L."/>
            <person name="Zhou L."/>
            <person name="Zafar N."/>
            <person name="Khouri H."/>
            <person name="Radune D."/>
            <person name="Dimitrov G."/>
            <person name="Watkins K."/>
            <person name="O'Connor K.J."/>
            <person name="Smith S."/>
            <person name="Utterback T.R."/>
            <person name="White O."/>
            <person name="Rubens C.E."/>
            <person name="Grandi G."/>
            <person name="Madoff L.C."/>
            <person name="Kasper D.L."/>
            <person name="Telford J.L."/>
            <person name="Wessels M.R."/>
            <person name="Rappuoli R."/>
            <person name="Fraser C.M."/>
        </authorList>
    </citation>
    <scope>NUCLEOTIDE SEQUENCE [LARGE SCALE GENOMIC DNA]</scope>
    <source>
        <strain>ATCC 27591 / A909 / CDC SS700</strain>
    </source>
</reference>
<feature type="chain" id="PRO_0000213207" description="N-acylneuraminate cytidylyltransferase">
    <location>
        <begin position="1"/>
        <end position="413"/>
    </location>
</feature>
<dbReference type="EC" id="2.7.7.43"/>
<dbReference type="EMBL" id="AB028896">
    <property type="protein sequence ID" value="BAA82290.1"/>
    <property type="molecule type" value="Genomic_DNA"/>
</dbReference>
<dbReference type="EMBL" id="CP000114">
    <property type="protein sequence ID" value="ABA45253.1"/>
    <property type="molecule type" value="Genomic_DNA"/>
</dbReference>
<dbReference type="PIR" id="S70912">
    <property type="entry name" value="S70912"/>
</dbReference>
<dbReference type="RefSeq" id="WP_000802346.1">
    <property type="nucleotide sequence ID" value="NC_007432.1"/>
</dbReference>
<dbReference type="SMR" id="P0A4V1"/>
<dbReference type="KEGG" id="sak:SAK_1247"/>
<dbReference type="HOGENOM" id="CLU_660110_0_0_9"/>
<dbReference type="GO" id="GO:0005737">
    <property type="term" value="C:cytoplasm"/>
    <property type="evidence" value="ECO:0007669"/>
    <property type="project" value="UniProtKB-SubCell"/>
</dbReference>
<dbReference type="GO" id="GO:0008781">
    <property type="term" value="F:N-acylneuraminate cytidylyltransferase activity"/>
    <property type="evidence" value="ECO:0007669"/>
    <property type="project" value="UniProtKB-EC"/>
</dbReference>
<dbReference type="GO" id="GO:0000271">
    <property type="term" value="P:polysaccharide biosynthetic process"/>
    <property type="evidence" value="ECO:0007669"/>
    <property type="project" value="UniProtKB-KW"/>
</dbReference>
<dbReference type="CDD" id="cd02513">
    <property type="entry name" value="CMP-NeuAc_Synthase"/>
    <property type="match status" value="1"/>
</dbReference>
<dbReference type="Gene3D" id="3.40.50.1110">
    <property type="entry name" value="SGNH hydrolase"/>
    <property type="match status" value="1"/>
</dbReference>
<dbReference type="Gene3D" id="3.90.550.10">
    <property type="entry name" value="Spore Coat Polysaccharide Biosynthesis Protein SpsA, Chain A"/>
    <property type="match status" value="1"/>
</dbReference>
<dbReference type="InterPro" id="IPR050793">
    <property type="entry name" value="CMP-NeuNAc_synthase"/>
</dbReference>
<dbReference type="InterPro" id="IPR003329">
    <property type="entry name" value="Cytidylyl_trans"/>
</dbReference>
<dbReference type="InterPro" id="IPR029044">
    <property type="entry name" value="Nucleotide-diphossugar_trans"/>
</dbReference>
<dbReference type="InterPro" id="IPR013830">
    <property type="entry name" value="SGNH_hydro"/>
</dbReference>
<dbReference type="InterPro" id="IPR036514">
    <property type="entry name" value="SGNH_hydro_sf"/>
</dbReference>
<dbReference type="PANTHER" id="PTHR21485">
    <property type="entry name" value="HAD SUPERFAMILY MEMBERS CMAS AND KDSC"/>
    <property type="match status" value="1"/>
</dbReference>
<dbReference type="PANTHER" id="PTHR21485:SF6">
    <property type="entry name" value="N-ACYLNEURAMINATE CYTIDYLYLTRANSFERASE-RELATED"/>
    <property type="match status" value="1"/>
</dbReference>
<dbReference type="Pfam" id="PF02348">
    <property type="entry name" value="CTP_transf_3"/>
    <property type="match status" value="1"/>
</dbReference>
<dbReference type="Pfam" id="PF13472">
    <property type="entry name" value="Lipase_GDSL_2"/>
    <property type="match status" value="1"/>
</dbReference>
<dbReference type="SUPFAM" id="SSF53448">
    <property type="entry name" value="Nucleotide-diphospho-sugar transferases"/>
    <property type="match status" value="1"/>
</dbReference>
<dbReference type="SUPFAM" id="SSF52266">
    <property type="entry name" value="SGNH hydrolase"/>
    <property type="match status" value="1"/>
</dbReference>
<evidence type="ECO:0000250" key="1"/>
<evidence type="ECO:0000305" key="2"/>
<comment type="function">
    <text evidence="1">Catalyzes the formation of CMP-N-acetylneuraminic acid (CMP-NeuNAc), which is essential for the formation of the capsule.</text>
</comment>
<comment type="catalytic activity">
    <reaction>
        <text>an N-acylneuraminate + CTP = a CMP-N-acyl-beta-neuraminate + diphosphate</text>
        <dbReference type="Rhea" id="RHEA:11344"/>
        <dbReference type="ChEBI" id="CHEBI:33019"/>
        <dbReference type="ChEBI" id="CHEBI:37563"/>
        <dbReference type="ChEBI" id="CHEBI:60073"/>
        <dbReference type="ChEBI" id="CHEBI:68671"/>
        <dbReference type="EC" id="2.7.7.43"/>
    </reaction>
</comment>
<comment type="cofactor">
    <cofactor evidence="1">
        <name>Mg(2+)</name>
        <dbReference type="ChEBI" id="CHEBI:18420"/>
    </cofactor>
    <cofactor evidence="1">
        <name>Mn(2+)</name>
        <dbReference type="ChEBI" id="CHEBI:29035"/>
    </cofactor>
</comment>
<comment type="subcellular location">
    <subcellularLocation>
        <location evidence="1">Cytoplasm</location>
    </subcellularLocation>
</comment>
<comment type="similarity">
    <text evidence="2">Belongs to the CMP-NeuNAc synthase family.</text>
</comment>